<name>FENR_CHLPM</name>
<evidence type="ECO:0000255" key="1">
    <source>
        <dbReference type="HAMAP-Rule" id="MF_01685"/>
    </source>
</evidence>
<comment type="catalytic activity">
    <reaction evidence="1">
        <text>2 reduced [2Fe-2S]-[ferredoxin] + NADP(+) + H(+) = 2 oxidized [2Fe-2S]-[ferredoxin] + NADPH</text>
        <dbReference type="Rhea" id="RHEA:20125"/>
        <dbReference type="Rhea" id="RHEA-COMP:10000"/>
        <dbReference type="Rhea" id="RHEA-COMP:10001"/>
        <dbReference type="ChEBI" id="CHEBI:15378"/>
        <dbReference type="ChEBI" id="CHEBI:33737"/>
        <dbReference type="ChEBI" id="CHEBI:33738"/>
        <dbReference type="ChEBI" id="CHEBI:57783"/>
        <dbReference type="ChEBI" id="CHEBI:58349"/>
        <dbReference type="EC" id="1.18.1.2"/>
    </reaction>
</comment>
<comment type="cofactor">
    <cofactor evidence="1">
        <name>FAD</name>
        <dbReference type="ChEBI" id="CHEBI:57692"/>
    </cofactor>
    <text evidence="1">Binds 1 FAD per subunit.</text>
</comment>
<comment type="subunit">
    <text evidence="1">Homodimer.</text>
</comment>
<comment type="similarity">
    <text evidence="1">Belongs to the ferredoxin--NADP reductase type 2 family.</text>
</comment>
<reference key="1">
    <citation type="submission" date="2007-03" db="EMBL/GenBank/DDBJ databases">
        <title>Complete sequence of Prosthecochloris vibrioformis DSM 265.</title>
        <authorList>
            <consortium name="US DOE Joint Genome Institute"/>
            <person name="Copeland A."/>
            <person name="Lucas S."/>
            <person name="Lapidus A."/>
            <person name="Barry K."/>
            <person name="Detter J.C."/>
            <person name="Glavina del Rio T."/>
            <person name="Hammon N."/>
            <person name="Israni S."/>
            <person name="Pitluck S."/>
            <person name="Schmutz J."/>
            <person name="Larimer F."/>
            <person name="Land M."/>
            <person name="Hauser L."/>
            <person name="Mikhailova N."/>
            <person name="Li T."/>
            <person name="Overmann J."/>
            <person name="Schuster S.C."/>
            <person name="Bryant D.A."/>
            <person name="Richardson P."/>
        </authorList>
    </citation>
    <scope>NUCLEOTIDE SEQUENCE [LARGE SCALE GENOMIC DNA]</scope>
    <source>
        <strain>DSM 265 / 1930</strain>
    </source>
</reference>
<gene>
    <name type="ordered locus">Cvib_1336</name>
</gene>
<accession>A4SFT9</accession>
<proteinExistence type="inferred from homology"/>
<feature type="chain" id="PRO_0000364902" description="Ferredoxin--NADP reductase">
    <location>
        <begin position="1"/>
        <end position="353"/>
    </location>
</feature>
<feature type="binding site" evidence="1">
    <location>
        <position position="25"/>
    </location>
    <ligand>
        <name>FAD</name>
        <dbReference type="ChEBI" id="CHEBI:57692"/>
    </ligand>
</feature>
<feature type="binding site" evidence="1">
    <location>
        <position position="44"/>
    </location>
    <ligand>
        <name>FAD</name>
        <dbReference type="ChEBI" id="CHEBI:57692"/>
    </ligand>
</feature>
<feature type="binding site" evidence="1">
    <location>
        <position position="52"/>
    </location>
    <ligand>
        <name>FAD</name>
        <dbReference type="ChEBI" id="CHEBI:57692"/>
    </ligand>
</feature>
<feature type="binding site" evidence="1">
    <location>
        <position position="57"/>
    </location>
    <ligand>
        <name>FAD</name>
        <dbReference type="ChEBI" id="CHEBI:57692"/>
    </ligand>
</feature>
<feature type="binding site" evidence="1">
    <location>
        <position position="97"/>
    </location>
    <ligand>
        <name>FAD</name>
        <dbReference type="ChEBI" id="CHEBI:57692"/>
    </ligand>
</feature>
<feature type="binding site" evidence="1">
    <location>
        <position position="132"/>
    </location>
    <ligand>
        <name>FAD</name>
        <dbReference type="ChEBI" id="CHEBI:57692"/>
    </ligand>
</feature>
<feature type="binding site" evidence="1">
    <location>
        <position position="298"/>
    </location>
    <ligand>
        <name>FAD</name>
        <dbReference type="ChEBI" id="CHEBI:57692"/>
    </ligand>
</feature>
<feature type="binding site" evidence="1">
    <location>
        <position position="339"/>
    </location>
    <ligand>
        <name>FAD</name>
        <dbReference type="ChEBI" id="CHEBI:57692"/>
    </ligand>
</feature>
<sequence length="353" mass="37697">MTDQPIFTGAAGAIIDLTIIGGGPTGIFAAFQCGMNNISCRVIESMPQLGGQLRALYPEKHIYDVAGFPEVPAASLVDSLWQQTERYSPEVVTGETVVSFRKLENGNFEVSTDAGSVFESRALLLAAGLGAFSPRKLPQLGDISDLEGSSVFYAVKAKSDFEGKRVVIVGGGDSALDWTVGLQGVASGITLVHRMHEFQGHGKTAREVDEARDAGTVDVHLNTEVASIERRGEGIASVQLRRKNASVCTVEADRLLLLIGFKSNLGPIANWGLELVDNAVVVDAHMKTSVDGLYAAGDIASYPGKLKIIQTGLSDAAMAVRHSLTYIKPGEKIRHSFSSVKMAKAKKKEEEHA</sequence>
<dbReference type="EC" id="1.18.1.2" evidence="1"/>
<dbReference type="EMBL" id="CP000607">
    <property type="protein sequence ID" value="ABP37348.1"/>
    <property type="molecule type" value="Genomic_DNA"/>
</dbReference>
<dbReference type="SMR" id="A4SFT9"/>
<dbReference type="STRING" id="290318.Cvib_1336"/>
<dbReference type="KEGG" id="pvi:Cvib_1336"/>
<dbReference type="eggNOG" id="COG0492">
    <property type="taxonomic scope" value="Bacteria"/>
</dbReference>
<dbReference type="HOGENOM" id="CLU_031864_5_5_10"/>
<dbReference type="OrthoDB" id="9806179at2"/>
<dbReference type="GO" id="GO:0004324">
    <property type="term" value="F:ferredoxin-NADP+ reductase activity"/>
    <property type="evidence" value="ECO:0007669"/>
    <property type="project" value="UniProtKB-UniRule"/>
</dbReference>
<dbReference type="GO" id="GO:0050660">
    <property type="term" value="F:flavin adenine dinucleotide binding"/>
    <property type="evidence" value="ECO:0007669"/>
    <property type="project" value="UniProtKB-UniRule"/>
</dbReference>
<dbReference type="GO" id="GO:0050661">
    <property type="term" value="F:NADP binding"/>
    <property type="evidence" value="ECO:0007669"/>
    <property type="project" value="UniProtKB-UniRule"/>
</dbReference>
<dbReference type="Gene3D" id="3.50.50.60">
    <property type="entry name" value="FAD/NAD(P)-binding domain"/>
    <property type="match status" value="2"/>
</dbReference>
<dbReference type="HAMAP" id="MF_01685">
    <property type="entry name" value="FENR2"/>
    <property type="match status" value="1"/>
</dbReference>
<dbReference type="InterPro" id="IPR036188">
    <property type="entry name" value="FAD/NAD-bd_sf"/>
</dbReference>
<dbReference type="InterPro" id="IPR023753">
    <property type="entry name" value="FAD/NAD-binding_dom"/>
</dbReference>
<dbReference type="InterPro" id="IPR022890">
    <property type="entry name" value="Fd--NADP_Rdtase_type_2"/>
</dbReference>
<dbReference type="InterPro" id="IPR050097">
    <property type="entry name" value="Ferredoxin-NADP_redctase_2"/>
</dbReference>
<dbReference type="PANTHER" id="PTHR48105">
    <property type="entry name" value="THIOREDOXIN REDUCTASE 1-RELATED-RELATED"/>
    <property type="match status" value="1"/>
</dbReference>
<dbReference type="Pfam" id="PF07992">
    <property type="entry name" value="Pyr_redox_2"/>
    <property type="match status" value="1"/>
</dbReference>
<dbReference type="PRINTS" id="PR00368">
    <property type="entry name" value="FADPNR"/>
</dbReference>
<dbReference type="PRINTS" id="PR00469">
    <property type="entry name" value="PNDRDTASEII"/>
</dbReference>
<dbReference type="SUPFAM" id="SSF51905">
    <property type="entry name" value="FAD/NAD(P)-binding domain"/>
    <property type="match status" value="1"/>
</dbReference>
<protein>
    <recommendedName>
        <fullName evidence="1">Ferredoxin--NADP reductase</fullName>
        <shortName evidence="1">FNR</shortName>
        <shortName evidence="1">Fd-NADP(+) reductase</shortName>
        <ecNumber evidence="1">1.18.1.2</ecNumber>
    </recommendedName>
</protein>
<keyword id="KW-0274">FAD</keyword>
<keyword id="KW-0285">Flavoprotein</keyword>
<keyword id="KW-0521">NADP</keyword>
<keyword id="KW-0560">Oxidoreductase</keyword>
<organism>
    <name type="scientific">Chlorobium phaeovibrioides (strain DSM 265 / 1930)</name>
    <name type="common">Prosthecochloris vibrioformis (strain DSM 265)</name>
    <dbReference type="NCBI Taxonomy" id="290318"/>
    <lineage>
        <taxon>Bacteria</taxon>
        <taxon>Pseudomonadati</taxon>
        <taxon>Chlorobiota</taxon>
        <taxon>Chlorobiia</taxon>
        <taxon>Chlorobiales</taxon>
        <taxon>Chlorobiaceae</taxon>
        <taxon>Chlorobium/Pelodictyon group</taxon>
        <taxon>Chlorobium</taxon>
    </lineage>
</organism>